<evidence type="ECO:0000255" key="1">
    <source>
        <dbReference type="HAMAP-Rule" id="MF_00036"/>
    </source>
</evidence>
<evidence type="ECO:0000256" key="2">
    <source>
        <dbReference type="SAM" id="MobiDB-lite"/>
    </source>
</evidence>
<protein>
    <recommendedName>
        <fullName evidence="1">Alanine--tRNA ligase</fullName>
        <ecNumber evidence="1">6.1.1.7</ecNumber>
    </recommendedName>
    <alternativeName>
        <fullName evidence="1">Alanyl-tRNA synthetase</fullName>
        <shortName evidence="1">AlaRS</shortName>
    </alternativeName>
</protein>
<sequence>MKTDELREKYLAFFETKGCVRQPSDVLVPAWDPSVLFTPAGMNQFKDHFLGKVKLDFTRATTCQKCLRTGDIDNVGRTAFHHTFFEMLGNFSFGDYFKEEAIHWAWEFLTDKKWLGIPGERLTVTVYKDDDEAFGIWHDKIGLPTQRISRMDEDENFWPASAPSEGPDGVCGPCSEIYYQLEDGSDVEIWNLVFTQFNRVGTPPDNLHPLPSKNIDTGMGLERTASVLQGVPTNFHIDSLFPIVEAASEVCGVKYEYESDNGRRLRRITDHARASVFAVHENVYPGPKDARSVIRRLIRRAVLDGYQMNLREPFLYKLVEAVADASKAAYPELGQTTQRVSEAIESEEKAFFSTIDGGMKRIHRLFEEMNDEASVMVPGAEAADLLTTYGVPPELVQTLAAEQNFTFDWSGFREAMDKHADESDGGQRVLFQTGPLETLKEALRETPFVGYEQTEATAVVKGIITGDGKGKGDDGQLLSHLDRPEDAVLRLVLDHSPFYGESGGQVGDIGVISNDNFEFEVIDTQRHASMIVHHGRLIRGKINEGETCTAKVDVENRTALARAHSATHILHHALHTHVGRHAEQQGSKVEPDRLRFDFTNPKAIDDETLVKIEQDVLGMVGKGDEIRWDTVSLADAREAGAMMLFGEKYPDPCRMVSMGTFSRELCGGTHLTNTKQVGSFEVVVEESVSTGTRRIEALTGERAKEHREQTQALLNEVAGKLNCDASVAAAATVALIEEVRRLKKELSSGKAADYPAEFVFDAKAAKAETTDISDYNAVRAAVRGLTRRLNVAITDVLSRLDSLLADRSKLVEQLKQVTAGGKISADDLIADGTKVGDTLLIVAETPGANPNIMRGWIDQIRKKSDTPTAVLLASSMNDKVMLVGGLSRDLVDRGLKAGDWVGAAAKVVGGSGGGRPDMAQAGGKDASKLPEALQQARETMTEKLG</sequence>
<dbReference type="EC" id="6.1.1.7" evidence="1"/>
<dbReference type="EMBL" id="BX294147">
    <property type="protein sequence ID" value="CAD78703.1"/>
    <property type="molecule type" value="Genomic_DNA"/>
</dbReference>
<dbReference type="RefSeq" id="NP_868425.1">
    <property type="nucleotide sequence ID" value="NC_005027.1"/>
</dbReference>
<dbReference type="RefSeq" id="WP_011121911.1">
    <property type="nucleotide sequence ID" value="NC_005027.1"/>
</dbReference>
<dbReference type="SMR" id="Q7UFH9"/>
<dbReference type="FunCoup" id="Q7UFH9">
    <property type="interactions" value="545"/>
</dbReference>
<dbReference type="STRING" id="243090.RB8543"/>
<dbReference type="EnsemblBacteria" id="CAD78703">
    <property type="protein sequence ID" value="CAD78703"/>
    <property type="gene ID" value="RB8543"/>
</dbReference>
<dbReference type="KEGG" id="rba:RB8543"/>
<dbReference type="PATRIC" id="fig|243090.15.peg.4105"/>
<dbReference type="eggNOG" id="COG0013">
    <property type="taxonomic scope" value="Bacteria"/>
</dbReference>
<dbReference type="HOGENOM" id="CLU_004485_1_1_0"/>
<dbReference type="InParanoid" id="Q7UFH9"/>
<dbReference type="OrthoDB" id="9803884at2"/>
<dbReference type="Proteomes" id="UP000001025">
    <property type="component" value="Chromosome"/>
</dbReference>
<dbReference type="GO" id="GO:0005829">
    <property type="term" value="C:cytosol"/>
    <property type="evidence" value="ECO:0000318"/>
    <property type="project" value="GO_Central"/>
</dbReference>
<dbReference type="GO" id="GO:0004813">
    <property type="term" value="F:alanine-tRNA ligase activity"/>
    <property type="evidence" value="ECO:0000318"/>
    <property type="project" value="GO_Central"/>
</dbReference>
<dbReference type="GO" id="GO:0002161">
    <property type="term" value="F:aminoacyl-tRNA deacylase activity"/>
    <property type="evidence" value="ECO:0000318"/>
    <property type="project" value="GO_Central"/>
</dbReference>
<dbReference type="GO" id="GO:0005524">
    <property type="term" value="F:ATP binding"/>
    <property type="evidence" value="ECO:0007669"/>
    <property type="project" value="UniProtKB-UniRule"/>
</dbReference>
<dbReference type="GO" id="GO:0000049">
    <property type="term" value="F:tRNA binding"/>
    <property type="evidence" value="ECO:0007669"/>
    <property type="project" value="UniProtKB-KW"/>
</dbReference>
<dbReference type="GO" id="GO:0008270">
    <property type="term" value="F:zinc ion binding"/>
    <property type="evidence" value="ECO:0007669"/>
    <property type="project" value="UniProtKB-UniRule"/>
</dbReference>
<dbReference type="GO" id="GO:0006419">
    <property type="term" value="P:alanyl-tRNA aminoacylation"/>
    <property type="evidence" value="ECO:0000318"/>
    <property type="project" value="GO_Central"/>
</dbReference>
<dbReference type="CDD" id="cd00673">
    <property type="entry name" value="AlaRS_core"/>
    <property type="match status" value="1"/>
</dbReference>
<dbReference type="FunFam" id="2.40.30.130:FF:000001">
    <property type="entry name" value="Alanine--tRNA ligase"/>
    <property type="match status" value="1"/>
</dbReference>
<dbReference type="FunFam" id="3.10.310.40:FF:000001">
    <property type="entry name" value="Alanine--tRNA ligase"/>
    <property type="match status" value="1"/>
</dbReference>
<dbReference type="FunFam" id="3.30.54.20:FF:000001">
    <property type="entry name" value="Alanine--tRNA ligase"/>
    <property type="match status" value="1"/>
</dbReference>
<dbReference type="FunFam" id="3.30.980.10:FF:000004">
    <property type="entry name" value="Alanine--tRNA ligase, cytoplasmic"/>
    <property type="match status" value="1"/>
</dbReference>
<dbReference type="Gene3D" id="2.40.30.130">
    <property type="match status" value="1"/>
</dbReference>
<dbReference type="Gene3D" id="3.10.310.40">
    <property type="match status" value="1"/>
</dbReference>
<dbReference type="Gene3D" id="3.30.54.20">
    <property type="match status" value="1"/>
</dbReference>
<dbReference type="Gene3D" id="3.30.930.10">
    <property type="entry name" value="Bira Bifunctional Protein, Domain 2"/>
    <property type="match status" value="1"/>
</dbReference>
<dbReference type="Gene3D" id="3.30.980.10">
    <property type="entry name" value="Threonyl-trna Synthetase, Chain A, domain 2"/>
    <property type="match status" value="1"/>
</dbReference>
<dbReference type="HAMAP" id="MF_00036_B">
    <property type="entry name" value="Ala_tRNA_synth_B"/>
    <property type="match status" value="1"/>
</dbReference>
<dbReference type="InterPro" id="IPR045864">
    <property type="entry name" value="aa-tRNA-synth_II/BPL/LPL"/>
</dbReference>
<dbReference type="InterPro" id="IPR002318">
    <property type="entry name" value="Ala-tRNA-lgiase_IIc"/>
</dbReference>
<dbReference type="InterPro" id="IPR018162">
    <property type="entry name" value="Ala-tRNA-ligase_IIc_anticod-bd"/>
</dbReference>
<dbReference type="InterPro" id="IPR018165">
    <property type="entry name" value="Ala-tRNA-synth_IIc_core"/>
</dbReference>
<dbReference type="InterPro" id="IPR018164">
    <property type="entry name" value="Ala-tRNA-synth_IIc_N"/>
</dbReference>
<dbReference type="InterPro" id="IPR050058">
    <property type="entry name" value="Ala-tRNA_ligase"/>
</dbReference>
<dbReference type="InterPro" id="IPR023033">
    <property type="entry name" value="Ala_tRNA_ligase_euk/bac"/>
</dbReference>
<dbReference type="InterPro" id="IPR003156">
    <property type="entry name" value="DHHA1_dom"/>
</dbReference>
<dbReference type="InterPro" id="IPR018163">
    <property type="entry name" value="Thr/Ala-tRNA-synth_IIc_edit"/>
</dbReference>
<dbReference type="InterPro" id="IPR009000">
    <property type="entry name" value="Transl_B-barrel_sf"/>
</dbReference>
<dbReference type="InterPro" id="IPR012947">
    <property type="entry name" value="tRNA_SAD"/>
</dbReference>
<dbReference type="NCBIfam" id="TIGR00344">
    <property type="entry name" value="alaS"/>
    <property type="match status" value="1"/>
</dbReference>
<dbReference type="PANTHER" id="PTHR11777:SF9">
    <property type="entry name" value="ALANINE--TRNA LIGASE, CYTOPLASMIC"/>
    <property type="match status" value="1"/>
</dbReference>
<dbReference type="PANTHER" id="PTHR11777">
    <property type="entry name" value="ALANYL-TRNA SYNTHETASE"/>
    <property type="match status" value="1"/>
</dbReference>
<dbReference type="Pfam" id="PF02272">
    <property type="entry name" value="DHHA1"/>
    <property type="match status" value="1"/>
</dbReference>
<dbReference type="Pfam" id="PF01411">
    <property type="entry name" value="tRNA-synt_2c"/>
    <property type="match status" value="1"/>
</dbReference>
<dbReference type="Pfam" id="PF07973">
    <property type="entry name" value="tRNA_SAD"/>
    <property type="match status" value="1"/>
</dbReference>
<dbReference type="PRINTS" id="PR00980">
    <property type="entry name" value="TRNASYNTHALA"/>
</dbReference>
<dbReference type="SMART" id="SM00863">
    <property type="entry name" value="tRNA_SAD"/>
    <property type="match status" value="1"/>
</dbReference>
<dbReference type="SUPFAM" id="SSF55681">
    <property type="entry name" value="Class II aaRS and biotin synthetases"/>
    <property type="match status" value="1"/>
</dbReference>
<dbReference type="SUPFAM" id="SSF101353">
    <property type="entry name" value="Putative anticodon-binding domain of alanyl-tRNA synthetase (AlaRS)"/>
    <property type="match status" value="1"/>
</dbReference>
<dbReference type="SUPFAM" id="SSF55186">
    <property type="entry name" value="ThrRS/AlaRS common domain"/>
    <property type="match status" value="1"/>
</dbReference>
<dbReference type="SUPFAM" id="SSF50447">
    <property type="entry name" value="Translation proteins"/>
    <property type="match status" value="1"/>
</dbReference>
<dbReference type="PROSITE" id="PS50860">
    <property type="entry name" value="AA_TRNA_LIGASE_II_ALA"/>
    <property type="match status" value="1"/>
</dbReference>
<proteinExistence type="inferred from homology"/>
<comment type="function">
    <text evidence="1">Catalyzes the attachment of alanine to tRNA(Ala) in a two-step reaction: alanine is first activated by ATP to form Ala-AMP and then transferred to the acceptor end of tRNA(Ala). Also edits incorrectly charged Ser-tRNA(Ala) and Gly-tRNA(Ala) via its editing domain.</text>
</comment>
<comment type="catalytic activity">
    <reaction evidence="1">
        <text>tRNA(Ala) + L-alanine + ATP = L-alanyl-tRNA(Ala) + AMP + diphosphate</text>
        <dbReference type="Rhea" id="RHEA:12540"/>
        <dbReference type="Rhea" id="RHEA-COMP:9657"/>
        <dbReference type="Rhea" id="RHEA-COMP:9923"/>
        <dbReference type="ChEBI" id="CHEBI:30616"/>
        <dbReference type="ChEBI" id="CHEBI:33019"/>
        <dbReference type="ChEBI" id="CHEBI:57972"/>
        <dbReference type="ChEBI" id="CHEBI:78442"/>
        <dbReference type="ChEBI" id="CHEBI:78497"/>
        <dbReference type="ChEBI" id="CHEBI:456215"/>
        <dbReference type="EC" id="6.1.1.7"/>
    </reaction>
</comment>
<comment type="cofactor">
    <cofactor evidence="1">
        <name>Zn(2+)</name>
        <dbReference type="ChEBI" id="CHEBI:29105"/>
    </cofactor>
    <text evidence="1">Binds 1 zinc ion per subunit.</text>
</comment>
<comment type="subcellular location">
    <subcellularLocation>
        <location evidence="1">Cytoplasm</location>
    </subcellularLocation>
</comment>
<comment type="domain">
    <text evidence="1">Consists of three domains; the N-terminal catalytic domain, the editing domain and the C-terminal C-Ala domain. The editing domain removes incorrectly charged amino acids, while the C-Ala domain, along with tRNA(Ala), serves as a bridge to cooperatively bring together the editing and aminoacylation centers thus stimulating deacylation of misacylated tRNAs.</text>
</comment>
<comment type="similarity">
    <text evidence="1">Belongs to the class-II aminoacyl-tRNA synthetase family.</text>
</comment>
<organism>
    <name type="scientific">Rhodopirellula baltica (strain DSM 10527 / NCIMB 13988 / SH1)</name>
    <dbReference type="NCBI Taxonomy" id="243090"/>
    <lineage>
        <taxon>Bacteria</taxon>
        <taxon>Pseudomonadati</taxon>
        <taxon>Planctomycetota</taxon>
        <taxon>Planctomycetia</taxon>
        <taxon>Pirellulales</taxon>
        <taxon>Pirellulaceae</taxon>
        <taxon>Rhodopirellula</taxon>
    </lineage>
</organism>
<feature type="chain" id="PRO_0000075188" description="Alanine--tRNA ligase">
    <location>
        <begin position="1"/>
        <end position="945"/>
    </location>
</feature>
<feature type="region of interest" description="Disordered" evidence="2">
    <location>
        <begin position="911"/>
        <end position="945"/>
    </location>
</feature>
<feature type="binding site" evidence="1">
    <location>
        <position position="564"/>
    </location>
    <ligand>
        <name>Zn(2+)</name>
        <dbReference type="ChEBI" id="CHEBI:29105"/>
    </ligand>
</feature>
<feature type="binding site" evidence="1">
    <location>
        <position position="568"/>
    </location>
    <ligand>
        <name>Zn(2+)</name>
        <dbReference type="ChEBI" id="CHEBI:29105"/>
    </ligand>
</feature>
<feature type="binding site" evidence="1">
    <location>
        <position position="666"/>
    </location>
    <ligand>
        <name>Zn(2+)</name>
        <dbReference type="ChEBI" id="CHEBI:29105"/>
    </ligand>
</feature>
<feature type="binding site" evidence="1">
    <location>
        <position position="670"/>
    </location>
    <ligand>
        <name>Zn(2+)</name>
        <dbReference type="ChEBI" id="CHEBI:29105"/>
    </ligand>
</feature>
<gene>
    <name evidence="1" type="primary">alaS</name>
    <name type="ordered locus">RB8543</name>
</gene>
<keyword id="KW-0030">Aminoacyl-tRNA synthetase</keyword>
<keyword id="KW-0067">ATP-binding</keyword>
<keyword id="KW-0963">Cytoplasm</keyword>
<keyword id="KW-0436">Ligase</keyword>
<keyword id="KW-0479">Metal-binding</keyword>
<keyword id="KW-0547">Nucleotide-binding</keyword>
<keyword id="KW-0648">Protein biosynthesis</keyword>
<keyword id="KW-1185">Reference proteome</keyword>
<keyword id="KW-0694">RNA-binding</keyword>
<keyword id="KW-0820">tRNA-binding</keyword>
<keyword id="KW-0862">Zinc</keyword>
<accession>Q7UFH9</accession>
<name>SYA_RHOBA</name>
<reference key="1">
    <citation type="journal article" date="2003" name="Proc. Natl. Acad. Sci. U.S.A.">
        <title>Complete genome sequence of the marine planctomycete Pirellula sp. strain 1.</title>
        <authorList>
            <person name="Gloeckner F.O."/>
            <person name="Kube M."/>
            <person name="Bauer M."/>
            <person name="Teeling H."/>
            <person name="Lombardot T."/>
            <person name="Ludwig W."/>
            <person name="Gade D."/>
            <person name="Beck A."/>
            <person name="Borzym K."/>
            <person name="Heitmann K."/>
            <person name="Rabus R."/>
            <person name="Schlesner H."/>
            <person name="Amann R."/>
            <person name="Reinhardt R."/>
        </authorList>
    </citation>
    <scope>NUCLEOTIDE SEQUENCE [LARGE SCALE GENOMIC DNA]</scope>
    <source>
        <strain>DSM 10527 / NCIMB 13988 / SH1</strain>
    </source>
</reference>